<name>RPOB_YERPB</name>
<comment type="function">
    <text evidence="1">DNA-dependent RNA polymerase catalyzes the transcription of DNA into RNA using the four ribonucleoside triphosphates as substrates.</text>
</comment>
<comment type="catalytic activity">
    <reaction evidence="1">
        <text>RNA(n) + a ribonucleoside 5'-triphosphate = RNA(n+1) + diphosphate</text>
        <dbReference type="Rhea" id="RHEA:21248"/>
        <dbReference type="Rhea" id="RHEA-COMP:14527"/>
        <dbReference type="Rhea" id="RHEA-COMP:17342"/>
        <dbReference type="ChEBI" id="CHEBI:33019"/>
        <dbReference type="ChEBI" id="CHEBI:61557"/>
        <dbReference type="ChEBI" id="CHEBI:140395"/>
        <dbReference type="EC" id="2.7.7.6"/>
    </reaction>
</comment>
<comment type="subunit">
    <text evidence="1">The RNAP catalytic core consists of 2 alpha, 1 beta, 1 beta' and 1 omega subunit. When a sigma factor is associated with the core the holoenzyme is formed, which can initiate transcription.</text>
</comment>
<comment type="similarity">
    <text evidence="1">Belongs to the RNA polymerase beta chain family.</text>
</comment>
<keyword id="KW-0240">DNA-directed RNA polymerase</keyword>
<keyword id="KW-0548">Nucleotidyltransferase</keyword>
<keyword id="KW-0804">Transcription</keyword>
<keyword id="KW-0808">Transferase</keyword>
<reference key="1">
    <citation type="submission" date="2008-04" db="EMBL/GenBank/DDBJ databases">
        <title>Complete sequence of Yersinia pseudotuberculosis PB1/+.</title>
        <authorList>
            <person name="Copeland A."/>
            <person name="Lucas S."/>
            <person name="Lapidus A."/>
            <person name="Glavina del Rio T."/>
            <person name="Dalin E."/>
            <person name="Tice H."/>
            <person name="Bruce D."/>
            <person name="Goodwin L."/>
            <person name="Pitluck S."/>
            <person name="Munk A.C."/>
            <person name="Brettin T."/>
            <person name="Detter J.C."/>
            <person name="Han C."/>
            <person name="Tapia R."/>
            <person name="Schmutz J."/>
            <person name="Larimer F."/>
            <person name="Land M."/>
            <person name="Hauser L."/>
            <person name="Challacombe J.F."/>
            <person name="Green L."/>
            <person name="Lindler L.E."/>
            <person name="Nikolich M.P."/>
            <person name="Richardson P."/>
        </authorList>
    </citation>
    <scope>NUCLEOTIDE SEQUENCE [LARGE SCALE GENOMIC DNA]</scope>
    <source>
        <strain>PB1/+</strain>
    </source>
</reference>
<gene>
    <name evidence="1" type="primary">rpoB</name>
    <name type="ordered locus">YPTS_0304</name>
</gene>
<organism>
    <name type="scientific">Yersinia pseudotuberculosis serotype IB (strain PB1/+)</name>
    <dbReference type="NCBI Taxonomy" id="502801"/>
    <lineage>
        <taxon>Bacteria</taxon>
        <taxon>Pseudomonadati</taxon>
        <taxon>Pseudomonadota</taxon>
        <taxon>Gammaproteobacteria</taxon>
        <taxon>Enterobacterales</taxon>
        <taxon>Yersiniaceae</taxon>
        <taxon>Yersinia</taxon>
    </lineage>
</organism>
<evidence type="ECO:0000255" key="1">
    <source>
        <dbReference type="HAMAP-Rule" id="MF_01321"/>
    </source>
</evidence>
<feature type="chain" id="PRO_1000141754" description="DNA-directed RNA polymerase subunit beta">
    <location>
        <begin position="1"/>
        <end position="1342"/>
    </location>
</feature>
<accession>B2K113</accession>
<sequence length="1342" mass="150389">MVYSYTEKKRIRKDFGKRPQVLDIPYLLSIQLDSFQKFIEQDPEGQHGLEAAFRSVFPIQSYSGNSELQYVSYRLGEPVFDVKECQIRGVTYSAPLRVKLRLVIYEREAPEGTVKDIKEQEVYMGEIPLMTENGTFVINGTERVIVSQLHRSPGVFFDSDKGKTHSSGKVLYNARIIPYRGSWLDFEFDPKDNLFVRIDRRRKLPATIILRALNFTTAQILDLFFEKVVFEIRDNKLQMELVPERLRGETASFDIEANGKVYVEKARRITARHIRQLEKDGIDRIEVPVEYIAGKVVAKDYVDASTGELICAANMELSLDLLAKLSQAGHKQIETLFTNDLDHGAYISETLRVDPTSDRLSALVEIYRMMRPGEPPTREAAENLFENLFFSEDRYDLSAVGRMKFNRSLLRDEIEGSGILSKEDITEVMKKLIDIRNGRGEVDDIDHLGNRRIRSVGEMAENQFRVGLVRVERAVKERLSLGDLDTLMPQDMINAKPISAAVKEFFGSSQLSQFMDQNNPLSEITHKRRISALGPGGLTRERAGFEVRDVHPTHYGRVCPIETPEGPNIGLINSLSVYAQTNEYGFLETPYRRVRDGVVTDEINYLSAIEEGNFVIAQANSNLDDEGRFLEDLVTCRSKGESSLFSREQVDYMDVSTQQIVSVGASLIPFLEHDDANRALMGANMQRQAVPTLRADKPLVGTGMERAVAVDSGVTSVAKRGGTVQYVDASRIVIKVNEDEMHPGEAGIDIYNLTKYTRSNQNTCINQMPCVNLGEPIERGDVLADGPSTDLGELALGQNMRVAFMPWNGYNFEDSILVSERVVQEDRFTTIHIQELACVSRDTKLGPEEITADIPNVGEAALSKLDESGIVYIGAEVTGGDILVGKVTPKGETQLTPEEKLLRAIFGEKASDVKDSSLRVPNGVSGTVIDVQVFTRDGVEKDKRALEIEEMQLKQAKKDLTEELQILEAGLFARIHAVLVSGGIEAEKLSKLPRERWLELGLTDEDKQNQLEQLAEQYDEMKSEFEKKMDAKRRKITQGDDLAPGVLKIVKVYLAVKRQIQPGDKMAGRHGNKGVISKINPIEDMPYDENGTPVDIVLNPLGVPSRMNIGQILETHLGMAAKGIGEKINAMLKKQEEVAKLREFIQKAYDLGDNVCQKVDLSTFTDDEVLRLAENLKKGMPIATPVFDGATEKEIKELLQLGGLPTSGQITLFDGRTGEQFERQVTVGYMYMLKLNHLVDDKMHARSTGSYSLVTQQPLGGKAQFGGQRFGEMEVWALEAYGAAYTLQEMLTVKSDDVNGRTKMYKNIVDGDHRMEPGMPESFNVLLKEIRSLGINIELEEE</sequence>
<proteinExistence type="inferred from homology"/>
<protein>
    <recommendedName>
        <fullName evidence="1">DNA-directed RNA polymerase subunit beta</fullName>
        <shortName evidence="1">RNAP subunit beta</shortName>
        <ecNumber evidence="1">2.7.7.6</ecNumber>
    </recommendedName>
    <alternativeName>
        <fullName evidence="1">RNA polymerase subunit beta</fullName>
    </alternativeName>
    <alternativeName>
        <fullName evidence="1">Transcriptase subunit beta</fullName>
    </alternativeName>
</protein>
<dbReference type="EC" id="2.7.7.6" evidence="1"/>
<dbReference type="EMBL" id="CP001048">
    <property type="protein sequence ID" value="ACC87295.1"/>
    <property type="molecule type" value="Genomic_DNA"/>
</dbReference>
<dbReference type="RefSeq" id="WP_002210676.1">
    <property type="nucleotide sequence ID" value="NZ_CP009780.1"/>
</dbReference>
<dbReference type="SMR" id="B2K113"/>
<dbReference type="GeneID" id="57974971"/>
<dbReference type="KEGG" id="ypb:YPTS_0304"/>
<dbReference type="PATRIC" id="fig|502801.10.peg.3979"/>
<dbReference type="GO" id="GO:0000428">
    <property type="term" value="C:DNA-directed RNA polymerase complex"/>
    <property type="evidence" value="ECO:0007669"/>
    <property type="project" value="UniProtKB-KW"/>
</dbReference>
<dbReference type="GO" id="GO:0003677">
    <property type="term" value="F:DNA binding"/>
    <property type="evidence" value="ECO:0007669"/>
    <property type="project" value="UniProtKB-UniRule"/>
</dbReference>
<dbReference type="GO" id="GO:0003899">
    <property type="term" value="F:DNA-directed RNA polymerase activity"/>
    <property type="evidence" value="ECO:0007669"/>
    <property type="project" value="UniProtKB-UniRule"/>
</dbReference>
<dbReference type="GO" id="GO:0032549">
    <property type="term" value="F:ribonucleoside binding"/>
    <property type="evidence" value="ECO:0007669"/>
    <property type="project" value="InterPro"/>
</dbReference>
<dbReference type="GO" id="GO:0006351">
    <property type="term" value="P:DNA-templated transcription"/>
    <property type="evidence" value="ECO:0007669"/>
    <property type="project" value="UniProtKB-UniRule"/>
</dbReference>
<dbReference type="CDD" id="cd00653">
    <property type="entry name" value="RNA_pol_B_RPB2"/>
    <property type="match status" value="1"/>
</dbReference>
<dbReference type="FunFam" id="2.30.150.10:FF:000001">
    <property type="entry name" value="DNA-directed RNA polymerase subunit beta"/>
    <property type="match status" value="1"/>
</dbReference>
<dbReference type="FunFam" id="2.40.270.10:FF:000003">
    <property type="entry name" value="DNA-directed RNA polymerase subunit beta"/>
    <property type="match status" value="1"/>
</dbReference>
<dbReference type="FunFam" id="2.40.270.10:FF:000004">
    <property type="entry name" value="DNA-directed RNA polymerase subunit beta"/>
    <property type="match status" value="1"/>
</dbReference>
<dbReference type="FunFam" id="2.40.50.100:FF:000006">
    <property type="entry name" value="DNA-directed RNA polymerase subunit beta"/>
    <property type="match status" value="1"/>
</dbReference>
<dbReference type="FunFam" id="2.40.50.150:FF:000001">
    <property type="entry name" value="DNA-directed RNA polymerase subunit beta"/>
    <property type="match status" value="1"/>
</dbReference>
<dbReference type="FunFam" id="3.90.1100.10:FF:000002">
    <property type="entry name" value="DNA-directed RNA polymerase subunit beta"/>
    <property type="match status" value="1"/>
</dbReference>
<dbReference type="FunFam" id="3.90.1110.10:FF:000001">
    <property type="entry name" value="DNA-directed RNA polymerase subunit beta"/>
    <property type="match status" value="1"/>
</dbReference>
<dbReference type="FunFam" id="3.90.1110.10:FF:000004">
    <property type="entry name" value="DNA-directed RNA polymerase subunit beta"/>
    <property type="match status" value="1"/>
</dbReference>
<dbReference type="FunFam" id="3.90.1800.10:FF:000001">
    <property type="entry name" value="DNA-directed RNA polymerase subunit beta"/>
    <property type="match status" value="1"/>
</dbReference>
<dbReference type="Gene3D" id="2.40.50.100">
    <property type="match status" value="1"/>
</dbReference>
<dbReference type="Gene3D" id="2.40.50.150">
    <property type="match status" value="1"/>
</dbReference>
<dbReference type="Gene3D" id="3.90.1100.10">
    <property type="match status" value="2"/>
</dbReference>
<dbReference type="Gene3D" id="2.30.150.10">
    <property type="entry name" value="DNA-directed RNA polymerase, beta subunit, external 1 domain"/>
    <property type="match status" value="1"/>
</dbReference>
<dbReference type="Gene3D" id="2.40.270.10">
    <property type="entry name" value="DNA-directed RNA polymerase, subunit 2, domain 6"/>
    <property type="match status" value="1"/>
</dbReference>
<dbReference type="Gene3D" id="3.90.1800.10">
    <property type="entry name" value="RNA polymerase alpha subunit dimerisation domain"/>
    <property type="match status" value="1"/>
</dbReference>
<dbReference type="Gene3D" id="3.90.1110.10">
    <property type="entry name" value="RNA polymerase Rpb2, domain 2"/>
    <property type="match status" value="1"/>
</dbReference>
<dbReference type="HAMAP" id="MF_01321">
    <property type="entry name" value="RNApol_bact_RpoB"/>
    <property type="match status" value="1"/>
</dbReference>
<dbReference type="InterPro" id="IPR042107">
    <property type="entry name" value="DNA-dir_RNA_pol_bsu_ext_1_sf"/>
</dbReference>
<dbReference type="InterPro" id="IPR019462">
    <property type="entry name" value="DNA-dir_RNA_pol_bsu_external_1"/>
</dbReference>
<dbReference type="InterPro" id="IPR015712">
    <property type="entry name" value="DNA-dir_RNA_pol_su2"/>
</dbReference>
<dbReference type="InterPro" id="IPR007120">
    <property type="entry name" value="DNA-dir_RNAP_su2_dom"/>
</dbReference>
<dbReference type="InterPro" id="IPR037033">
    <property type="entry name" value="DNA-dir_RNAP_su2_hyb_sf"/>
</dbReference>
<dbReference type="InterPro" id="IPR010243">
    <property type="entry name" value="RNA_pol_bsu_bac"/>
</dbReference>
<dbReference type="InterPro" id="IPR007121">
    <property type="entry name" value="RNA_pol_bsu_CS"/>
</dbReference>
<dbReference type="InterPro" id="IPR007644">
    <property type="entry name" value="RNA_pol_bsu_protrusion"/>
</dbReference>
<dbReference type="InterPro" id="IPR007642">
    <property type="entry name" value="RNA_pol_Rpb2_2"/>
</dbReference>
<dbReference type="InterPro" id="IPR037034">
    <property type="entry name" value="RNA_pol_Rpb2_2_sf"/>
</dbReference>
<dbReference type="InterPro" id="IPR007645">
    <property type="entry name" value="RNA_pol_Rpb2_3"/>
</dbReference>
<dbReference type="InterPro" id="IPR007641">
    <property type="entry name" value="RNA_pol_Rpb2_7"/>
</dbReference>
<dbReference type="InterPro" id="IPR014724">
    <property type="entry name" value="RNA_pol_RPB2_OB-fold"/>
</dbReference>
<dbReference type="NCBIfam" id="NF001616">
    <property type="entry name" value="PRK00405.1"/>
    <property type="match status" value="1"/>
</dbReference>
<dbReference type="NCBIfam" id="TIGR02013">
    <property type="entry name" value="rpoB"/>
    <property type="match status" value="1"/>
</dbReference>
<dbReference type="PANTHER" id="PTHR20856">
    <property type="entry name" value="DNA-DIRECTED RNA POLYMERASE I SUBUNIT 2"/>
    <property type="match status" value="1"/>
</dbReference>
<dbReference type="Pfam" id="PF04563">
    <property type="entry name" value="RNA_pol_Rpb2_1"/>
    <property type="match status" value="1"/>
</dbReference>
<dbReference type="Pfam" id="PF04561">
    <property type="entry name" value="RNA_pol_Rpb2_2"/>
    <property type="match status" value="2"/>
</dbReference>
<dbReference type="Pfam" id="PF04565">
    <property type="entry name" value="RNA_pol_Rpb2_3"/>
    <property type="match status" value="1"/>
</dbReference>
<dbReference type="Pfam" id="PF10385">
    <property type="entry name" value="RNA_pol_Rpb2_45"/>
    <property type="match status" value="1"/>
</dbReference>
<dbReference type="Pfam" id="PF00562">
    <property type="entry name" value="RNA_pol_Rpb2_6"/>
    <property type="match status" value="1"/>
</dbReference>
<dbReference type="Pfam" id="PF04560">
    <property type="entry name" value="RNA_pol_Rpb2_7"/>
    <property type="match status" value="1"/>
</dbReference>
<dbReference type="SUPFAM" id="SSF64484">
    <property type="entry name" value="beta and beta-prime subunits of DNA dependent RNA-polymerase"/>
    <property type="match status" value="1"/>
</dbReference>
<dbReference type="PROSITE" id="PS01166">
    <property type="entry name" value="RNA_POL_BETA"/>
    <property type="match status" value="1"/>
</dbReference>